<keyword id="KW-1185">Reference proteome</keyword>
<keyword id="KW-0687">Ribonucleoprotein</keyword>
<keyword id="KW-0689">Ribosomal protein</keyword>
<reference key="1">
    <citation type="journal article" date="1998" name="Nature">
        <title>Analysis of 1.9 Mb of contiguous sequence from chromosome 4 of Arabidopsis thaliana.</title>
        <authorList>
            <person name="Bevan M."/>
            <person name="Bancroft I."/>
            <person name="Bent E."/>
            <person name="Love K."/>
            <person name="Goodman H.M."/>
            <person name="Dean C."/>
            <person name="Bergkamp R."/>
            <person name="Dirkse W."/>
            <person name="van Staveren M."/>
            <person name="Stiekema W."/>
            <person name="Drost L."/>
            <person name="Ridley P."/>
            <person name="Hudson S.-A."/>
            <person name="Patel K."/>
            <person name="Murphy G."/>
            <person name="Piffanelli P."/>
            <person name="Wedler H."/>
            <person name="Wedler E."/>
            <person name="Wambutt R."/>
            <person name="Weitzenegger T."/>
            <person name="Pohl T."/>
            <person name="Terryn N."/>
            <person name="Gielen J."/>
            <person name="Villarroel R."/>
            <person name="De Clercq R."/>
            <person name="van Montagu M."/>
            <person name="Lecharny A."/>
            <person name="Aubourg S."/>
            <person name="Gy I."/>
            <person name="Kreis M."/>
            <person name="Lao N."/>
            <person name="Kavanagh T."/>
            <person name="Hempel S."/>
            <person name="Kotter P."/>
            <person name="Entian K.-D."/>
            <person name="Rieger M."/>
            <person name="Schaefer M."/>
            <person name="Funk B."/>
            <person name="Mueller-Auer S."/>
            <person name="Silvey M."/>
            <person name="James R."/>
            <person name="Monfort A."/>
            <person name="Pons A."/>
            <person name="Puigdomenech P."/>
            <person name="Douka A."/>
            <person name="Voukelatou E."/>
            <person name="Milioni D."/>
            <person name="Hatzopoulos P."/>
            <person name="Piravandi E."/>
            <person name="Obermaier B."/>
            <person name="Hilbert H."/>
            <person name="Duesterhoeft A."/>
            <person name="Moores T."/>
            <person name="Jones J.D.G."/>
            <person name="Eneva T."/>
            <person name="Palme K."/>
            <person name="Benes V."/>
            <person name="Rechmann S."/>
            <person name="Ansorge W."/>
            <person name="Cooke R."/>
            <person name="Berger C."/>
            <person name="Delseny M."/>
            <person name="Voet M."/>
            <person name="Volckaert G."/>
            <person name="Mewes H.-W."/>
            <person name="Klosterman S."/>
            <person name="Schueller C."/>
            <person name="Chalwatzis N."/>
        </authorList>
    </citation>
    <scope>NUCLEOTIDE SEQUENCE [LARGE SCALE GENOMIC DNA]</scope>
    <source>
        <strain>cv. Columbia</strain>
    </source>
</reference>
<reference key="2">
    <citation type="journal article" date="1999" name="Nature">
        <title>Sequence and analysis of chromosome 4 of the plant Arabidopsis thaliana.</title>
        <authorList>
            <person name="Mayer K.F.X."/>
            <person name="Schueller C."/>
            <person name="Wambutt R."/>
            <person name="Murphy G."/>
            <person name="Volckaert G."/>
            <person name="Pohl T."/>
            <person name="Duesterhoeft A."/>
            <person name="Stiekema W."/>
            <person name="Entian K.-D."/>
            <person name="Terryn N."/>
            <person name="Harris B."/>
            <person name="Ansorge W."/>
            <person name="Brandt P."/>
            <person name="Grivell L.A."/>
            <person name="Rieger M."/>
            <person name="Weichselgartner M."/>
            <person name="de Simone V."/>
            <person name="Obermaier B."/>
            <person name="Mache R."/>
            <person name="Mueller M."/>
            <person name="Kreis M."/>
            <person name="Delseny M."/>
            <person name="Puigdomenech P."/>
            <person name="Watson M."/>
            <person name="Schmidtheini T."/>
            <person name="Reichert B."/>
            <person name="Portetelle D."/>
            <person name="Perez-Alonso M."/>
            <person name="Boutry M."/>
            <person name="Bancroft I."/>
            <person name="Vos P."/>
            <person name="Hoheisel J."/>
            <person name="Zimmermann W."/>
            <person name="Wedler H."/>
            <person name="Ridley P."/>
            <person name="Langham S.-A."/>
            <person name="McCullagh B."/>
            <person name="Bilham L."/>
            <person name="Robben J."/>
            <person name="van der Schueren J."/>
            <person name="Grymonprez B."/>
            <person name="Chuang Y.-J."/>
            <person name="Vandenbussche F."/>
            <person name="Braeken M."/>
            <person name="Weltjens I."/>
            <person name="Voet M."/>
            <person name="Bastiaens I."/>
            <person name="Aert R."/>
            <person name="Defoor E."/>
            <person name="Weitzenegger T."/>
            <person name="Bothe G."/>
            <person name="Ramsperger U."/>
            <person name="Hilbert H."/>
            <person name="Braun M."/>
            <person name="Holzer E."/>
            <person name="Brandt A."/>
            <person name="Peters S."/>
            <person name="van Staveren M."/>
            <person name="Dirkse W."/>
            <person name="Mooijman P."/>
            <person name="Klein Lankhorst R."/>
            <person name="Rose M."/>
            <person name="Hauf J."/>
            <person name="Koetter P."/>
            <person name="Berneiser S."/>
            <person name="Hempel S."/>
            <person name="Feldpausch M."/>
            <person name="Lamberth S."/>
            <person name="Van den Daele H."/>
            <person name="De Keyser A."/>
            <person name="Buysshaert C."/>
            <person name="Gielen J."/>
            <person name="Villarroel R."/>
            <person name="De Clercq R."/>
            <person name="van Montagu M."/>
            <person name="Rogers J."/>
            <person name="Cronin A."/>
            <person name="Quail M.A."/>
            <person name="Bray-Allen S."/>
            <person name="Clark L."/>
            <person name="Doggett J."/>
            <person name="Hall S."/>
            <person name="Kay M."/>
            <person name="Lennard N."/>
            <person name="McLay K."/>
            <person name="Mayes R."/>
            <person name="Pettett A."/>
            <person name="Rajandream M.A."/>
            <person name="Lyne M."/>
            <person name="Benes V."/>
            <person name="Rechmann S."/>
            <person name="Borkova D."/>
            <person name="Bloecker H."/>
            <person name="Scharfe M."/>
            <person name="Grimm M."/>
            <person name="Loehnert T.-H."/>
            <person name="Dose S."/>
            <person name="de Haan M."/>
            <person name="Maarse A.C."/>
            <person name="Schaefer M."/>
            <person name="Mueller-Auer S."/>
            <person name="Gabel C."/>
            <person name="Fuchs M."/>
            <person name="Fartmann B."/>
            <person name="Granderath K."/>
            <person name="Dauner D."/>
            <person name="Herzl A."/>
            <person name="Neumann S."/>
            <person name="Argiriou A."/>
            <person name="Vitale D."/>
            <person name="Liguori R."/>
            <person name="Piravandi E."/>
            <person name="Massenet O."/>
            <person name="Quigley F."/>
            <person name="Clabauld G."/>
            <person name="Muendlein A."/>
            <person name="Felber R."/>
            <person name="Schnabl S."/>
            <person name="Hiller R."/>
            <person name="Schmidt W."/>
            <person name="Lecharny A."/>
            <person name="Aubourg S."/>
            <person name="Chefdor F."/>
            <person name="Cooke R."/>
            <person name="Berger C."/>
            <person name="Monfort A."/>
            <person name="Casacuberta E."/>
            <person name="Gibbons T."/>
            <person name="Weber N."/>
            <person name="Vandenbol M."/>
            <person name="Bargues M."/>
            <person name="Terol J."/>
            <person name="Torres A."/>
            <person name="Perez-Perez A."/>
            <person name="Purnelle B."/>
            <person name="Bent E."/>
            <person name="Johnson S."/>
            <person name="Tacon D."/>
            <person name="Jesse T."/>
            <person name="Heijnen L."/>
            <person name="Schwarz S."/>
            <person name="Scholler P."/>
            <person name="Heber S."/>
            <person name="Francs P."/>
            <person name="Bielke C."/>
            <person name="Frishman D."/>
            <person name="Haase D."/>
            <person name="Lemcke K."/>
            <person name="Mewes H.-W."/>
            <person name="Stocker S."/>
            <person name="Zaccaria P."/>
            <person name="Bevan M."/>
            <person name="Wilson R.K."/>
            <person name="de la Bastide M."/>
            <person name="Habermann K."/>
            <person name="Parnell L."/>
            <person name="Dedhia N."/>
            <person name="Gnoj L."/>
            <person name="Schutz K."/>
            <person name="Huang E."/>
            <person name="Spiegel L."/>
            <person name="Sekhon M."/>
            <person name="Murray J."/>
            <person name="Sheet P."/>
            <person name="Cordes M."/>
            <person name="Abu-Threideh J."/>
            <person name="Stoneking T."/>
            <person name="Kalicki J."/>
            <person name="Graves T."/>
            <person name="Harmon G."/>
            <person name="Edwards J."/>
            <person name="Latreille P."/>
            <person name="Courtney L."/>
            <person name="Cloud J."/>
            <person name="Abbott A."/>
            <person name="Scott K."/>
            <person name="Johnson D."/>
            <person name="Minx P."/>
            <person name="Bentley D."/>
            <person name="Fulton B."/>
            <person name="Miller N."/>
            <person name="Greco T."/>
            <person name="Kemp K."/>
            <person name="Kramer J."/>
            <person name="Fulton L."/>
            <person name="Mardis E."/>
            <person name="Dante M."/>
            <person name="Pepin K."/>
            <person name="Hillier L.W."/>
            <person name="Nelson J."/>
            <person name="Spieth J."/>
            <person name="Ryan E."/>
            <person name="Andrews S."/>
            <person name="Geisel C."/>
            <person name="Layman D."/>
            <person name="Du H."/>
            <person name="Ali J."/>
            <person name="Berghoff A."/>
            <person name="Jones K."/>
            <person name="Drone K."/>
            <person name="Cotton M."/>
            <person name="Joshu C."/>
            <person name="Antonoiu B."/>
            <person name="Zidanic M."/>
            <person name="Strong C."/>
            <person name="Sun H."/>
            <person name="Lamar B."/>
            <person name="Yordan C."/>
            <person name="Ma P."/>
            <person name="Zhong J."/>
            <person name="Preston R."/>
            <person name="Vil D."/>
            <person name="Shekher M."/>
            <person name="Matero A."/>
            <person name="Shah R."/>
            <person name="Swaby I.K."/>
            <person name="O'Shaughnessy A."/>
            <person name="Rodriguez M."/>
            <person name="Hoffman J."/>
            <person name="Till S."/>
            <person name="Granat S."/>
            <person name="Shohdy N."/>
            <person name="Hasegawa A."/>
            <person name="Hameed A."/>
            <person name="Lodhi M."/>
            <person name="Johnson A."/>
            <person name="Chen E."/>
            <person name="Marra M.A."/>
            <person name="Martienssen R."/>
            <person name="McCombie W.R."/>
        </authorList>
    </citation>
    <scope>NUCLEOTIDE SEQUENCE [LARGE SCALE GENOMIC DNA]</scope>
    <source>
        <strain>cv. Columbia</strain>
    </source>
</reference>
<reference key="3">
    <citation type="journal article" date="2017" name="Plant J.">
        <title>Araport11: a complete reannotation of the Arabidopsis thaliana reference genome.</title>
        <authorList>
            <person name="Cheng C.Y."/>
            <person name="Krishnakumar V."/>
            <person name="Chan A.P."/>
            <person name="Thibaud-Nissen F."/>
            <person name="Schobel S."/>
            <person name="Town C.D."/>
        </authorList>
    </citation>
    <scope>GENOME REANNOTATION</scope>
    <source>
        <strain>cv. Columbia</strain>
    </source>
</reference>
<reference key="4">
    <citation type="journal article" date="2003" name="Science">
        <title>Empirical analysis of transcriptional activity in the Arabidopsis genome.</title>
        <authorList>
            <person name="Yamada K."/>
            <person name="Lim J."/>
            <person name="Dale J.M."/>
            <person name="Chen H."/>
            <person name="Shinn P."/>
            <person name="Palm C.J."/>
            <person name="Southwick A.M."/>
            <person name="Wu H.C."/>
            <person name="Kim C.J."/>
            <person name="Nguyen M."/>
            <person name="Pham P.K."/>
            <person name="Cheuk R.F."/>
            <person name="Karlin-Newmann G."/>
            <person name="Liu S.X."/>
            <person name="Lam B."/>
            <person name="Sakano H."/>
            <person name="Wu T."/>
            <person name="Yu G."/>
            <person name="Miranda M."/>
            <person name="Quach H.L."/>
            <person name="Tripp M."/>
            <person name="Chang C.H."/>
            <person name="Lee J.M."/>
            <person name="Toriumi M.J."/>
            <person name="Chan M.M."/>
            <person name="Tang C.C."/>
            <person name="Onodera C.S."/>
            <person name="Deng J.M."/>
            <person name="Akiyama K."/>
            <person name="Ansari Y."/>
            <person name="Arakawa T."/>
            <person name="Banh J."/>
            <person name="Banno F."/>
            <person name="Bowser L."/>
            <person name="Brooks S.Y."/>
            <person name="Carninci P."/>
            <person name="Chao Q."/>
            <person name="Choy N."/>
            <person name="Enju A."/>
            <person name="Goldsmith A.D."/>
            <person name="Gurjal M."/>
            <person name="Hansen N.F."/>
            <person name="Hayashizaki Y."/>
            <person name="Johnson-Hopson C."/>
            <person name="Hsuan V.W."/>
            <person name="Iida K."/>
            <person name="Karnes M."/>
            <person name="Khan S."/>
            <person name="Koesema E."/>
            <person name="Ishida J."/>
            <person name="Jiang P.X."/>
            <person name="Jones T."/>
            <person name="Kawai J."/>
            <person name="Kamiya A."/>
            <person name="Meyers C."/>
            <person name="Nakajima M."/>
            <person name="Narusaka M."/>
            <person name="Seki M."/>
            <person name="Sakurai T."/>
            <person name="Satou M."/>
            <person name="Tamse R."/>
            <person name="Vaysberg M."/>
            <person name="Wallender E.K."/>
            <person name="Wong C."/>
            <person name="Yamamura Y."/>
            <person name="Yuan S."/>
            <person name="Shinozaki K."/>
            <person name="Davis R.W."/>
            <person name="Theologis A."/>
            <person name="Ecker J.R."/>
        </authorList>
    </citation>
    <scope>NUCLEOTIDE SEQUENCE [LARGE SCALE MRNA]</scope>
    <source>
        <strain>cv. Columbia</strain>
    </source>
</reference>
<reference key="5">
    <citation type="submission" date="2002-03" db="EMBL/GenBank/DDBJ databases">
        <title>Full-length cDNA from Arabidopsis thaliana.</title>
        <authorList>
            <person name="Brover V.V."/>
            <person name="Troukhan M.E."/>
            <person name="Alexandrov N.A."/>
            <person name="Lu Y.-P."/>
            <person name="Flavell R.B."/>
            <person name="Feldmann K.A."/>
        </authorList>
    </citation>
    <scope>NUCLEOTIDE SEQUENCE [LARGE SCALE MRNA]</scope>
</reference>
<reference key="6">
    <citation type="journal article" date="2001" name="Plant Physiol.">
        <title>The organization of cytoplasmic ribosomal protein genes in the Arabidopsis genome.</title>
        <authorList>
            <person name="Barakat A."/>
            <person name="Szick-Miranda K."/>
            <person name="Chang I.-F."/>
            <person name="Guyot R."/>
            <person name="Blanc G."/>
            <person name="Cooke R."/>
            <person name="Delseny M."/>
            <person name="Bailey-Serres J."/>
        </authorList>
    </citation>
    <scope>GENE FAMILY ORGANIZATION</scope>
    <scope>NOMENCLATURE</scope>
</reference>
<reference key="7">
    <citation type="journal article" date="2023" name="Plant Cell">
        <title>An updated nomenclature for plant ribosomal protein genes.</title>
        <authorList>
            <person name="Scarpin M.R."/>
            <person name="Busche M."/>
            <person name="Martinez R.E."/>
            <person name="Harper L.C."/>
            <person name="Reiser L."/>
            <person name="Szakonyi D."/>
            <person name="Merchante C."/>
            <person name="Lan T."/>
            <person name="Xiong W."/>
            <person name="Mo B."/>
            <person name="Tang G."/>
            <person name="Chen X."/>
            <person name="Bailey-Serres J."/>
            <person name="Browning K.S."/>
            <person name="Brunkard J.O."/>
        </authorList>
    </citation>
    <scope>NOMENCLATURE</scope>
</reference>
<dbReference type="EMBL" id="Z97343">
    <property type="protein sequence ID" value="CAB10520.1"/>
    <property type="status" value="ALT_SEQ"/>
    <property type="molecule type" value="Genomic_DNA"/>
</dbReference>
<dbReference type="EMBL" id="AL161546">
    <property type="protein sequence ID" value="CAB78742.1"/>
    <property type="status" value="ALT_SEQ"/>
    <property type="molecule type" value="Genomic_DNA"/>
</dbReference>
<dbReference type="EMBL" id="CP002687">
    <property type="protein sequence ID" value="AEE83883.1"/>
    <property type="molecule type" value="Genomic_DNA"/>
</dbReference>
<dbReference type="EMBL" id="AY072118">
    <property type="protein sequence ID" value="AAL59940.1"/>
    <property type="molecule type" value="mRNA"/>
</dbReference>
<dbReference type="EMBL" id="AY122965">
    <property type="protein sequence ID" value="AAM67498.1"/>
    <property type="molecule type" value="mRNA"/>
</dbReference>
<dbReference type="EMBL" id="AY087088">
    <property type="protein sequence ID" value="AAM64649.1"/>
    <property type="molecule type" value="mRNA"/>
</dbReference>
<dbReference type="PIR" id="C71443">
    <property type="entry name" value="C71443"/>
</dbReference>
<dbReference type="RefSeq" id="NP_193470.1">
    <property type="nucleotide sequence ID" value="NM_117843.4"/>
</dbReference>
<dbReference type="SMR" id="Q8VYF1"/>
<dbReference type="BioGRID" id="12744">
    <property type="interactions" value="168"/>
</dbReference>
<dbReference type="FunCoup" id="Q8VYF1">
    <property type="interactions" value="3598"/>
</dbReference>
<dbReference type="STRING" id="3702.Q8VYF1"/>
<dbReference type="iPTMnet" id="Q8VYF1"/>
<dbReference type="PaxDb" id="3702-AT4G17390.1"/>
<dbReference type="EnsemblPlants" id="AT4G17390.1">
    <property type="protein sequence ID" value="AT4G17390.1"/>
    <property type="gene ID" value="AT4G17390"/>
</dbReference>
<dbReference type="GeneID" id="827451"/>
<dbReference type="Gramene" id="AT4G17390.1">
    <property type="protein sequence ID" value="AT4G17390.1"/>
    <property type="gene ID" value="AT4G17390"/>
</dbReference>
<dbReference type="KEGG" id="ath:AT4G17390"/>
<dbReference type="Araport" id="AT4G17390"/>
<dbReference type="TAIR" id="AT4G17390"/>
<dbReference type="eggNOG" id="KOG1678">
    <property type="taxonomic scope" value="Eukaryota"/>
</dbReference>
<dbReference type="HOGENOM" id="CLU_080796_0_0_1"/>
<dbReference type="InParanoid" id="Q8VYF1"/>
<dbReference type="OMA" id="HRICVRR"/>
<dbReference type="OrthoDB" id="10255148at2759"/>
<dbReference type="PhylomeDB" id="Q8VYF1"/>
<dbReference type="CD-CODE" id="4299E36E">
    <property type="entry name" value="Nucleolus"/>
</dbReference>
<dbReference type="PRO" id="PR:Q8VYF1"/>
<dbReference type="Proteomes" id="UP000006548">
    <property type="component" value="Chromosome 4"/>
</dbReference>
<dbReference type="ExpressionAtlas" id="Q8VYF1">
    <property type="expression patterns" value="baseline and differential"/>
</dbReference>
<dbReference type="GO" id="GO:0005829">
    <property type="term" value="C:cytosol"/>
    <property type="evidence" value="ECO:0007005"/>
    <property type="project" value="TAIR"/>
</dbReference>
<dbReference type="GO" id="GO:0022625">
    <property type="term" value="C:cytosolic large ribosomal subunit"/>
    <property type="evidence" value="ECO:0007005"/>
    <property type="project" value="TAIR"/>
</dbReference>
<dbReference type="GO" id="GO:0005730">
    <property type="term" value="C:nucleolus"/>
    <property type="evidence" value="ECO:0007005"/>
    <property type="project" value="TAIR"/>
</dbReference>
<dbReference type="GO" id="GO:0003729">
    <property type="term" value="F:mRNA binding"/>
    <property type="evidence" value="ECO:0000314"/>
    <property type="project" value="TAIR"/>
</dbReference>
<dbReference type="GO" id="GO:0003735">
    <property type="term" value="F:structural constituent of ribosome"/>
    <property type="evidence" value="ECO:0000314"/>
    <property type="project" value="CAFA"/>
</dbReference>
<dbReference type="GO" id="GO:0006412">
    <property type="term" value="P:translation"/>
    <property type="evidence" value="ECO:0007669"/>
    <property type="project" value="InterPro"/>
</dbReference>
<dbReference type="FunFam" id="3.40.1120.10:FF:000001">
    <property type="entry name" value="Ribosomal protein L15"/>
    <property type="match status" value="1"/>
</dbReference>
<dbReference type="Gene3D" id="3.40.1120.10">
    <property type="entry name" value="Ribosomal protein l15e"/>
    <property type="match status" value="1"/>
</dbReference>
<dbReference type="InterPro" id="IPR024794">
    <property type="entry name" value="Rbsml_eL15_core_dom_sf"/>
</dbReference>
<dbReference type="InterPro" id="IPR000439">
    <property type="entry name" value="Ribosomal_eL15"/>
</dbReference>
<dbReference type="InterPro" id="IPR020925">
    <property type="entry name" value="Ribosomal_eL15_CS"/>
</dbReference>
<dbReference type="InterPro" id="IPR012678">
    <property type="entry name" value="Ribosomal_uL23/eL15/eS24_sf"/>
</dbReference>
<dbReference type="NCBIfam" id="NF003269">
    <property type="entry name" value="PRK04243.1"/>
    <property type="match status" value="1"/>
</dbReference>
<dbReference type="PANTHER" id="PTHR11847:SF22">
    <property type="entry name" value="LARGE RIBOSOMAL SUBUNIT PROTEIN EL15Y-RELATED"/>
    <property type="match status" value="1"/>
</dbReference>
<dbReference type="PANTHER" id="PTHR11847">
    <property type="entry name" value="RIBOSOMAL PROTEIN L15"/>
    <property type="match status" value="1"/>
</dbReference>
<dbReference type="Pfam" id="PF00827">
    <property type="entry name" value="Ribosomal_L15e"/>
    <property type="match status" value="1"/>
</dbReference>
<dbReference type="SMART" id="SM01384">
    <property type="entry name" value="Ribosomal_L15e"/>
    <property type="match status" value="1"/>
</dbReference>
<dbReference type="SUPFAM" id="SSF54189">
    <property type="entry name" value="Ribosomal proteins S24e, L23 and L15e"/>
    <property type="match status" value="1"/>
</dbReference>
<dbReference type="PROSITE" id="PS01194">
    <property type="entry name" value="RIBOSOMAL_L15E"/>
    <property type="match status" value="1"/>
</dbReference>
<evidence type="ECO:0000256" key="1">
    <source>
        <dbReference type="SAM" id="MobiDB-lite"/>
    </source>
</evidence>
<evidence type="ECO:0000303" key="2">
    <source>
    </source>
</evidence>
<evidence type="ECO:0000305" key="3"/>
<name>RL152_ARATH</name>
<feature type="chain" id="PRO_0000240518" description="Large ribosomal subunit protein eL15y">
    <location>
        <begin position="1"/>
        <end position="204"/>
    </location>
</feature>
<feature type="region of interest" description="Disordered" evidence="1">
    <location>
        <begin position="162"/>
        <end position="204"/>
    </location>
</feature>
<feature type="compositionally biased region" description="Basic residues" evidence="1">
    <location>
        <begin position="171"/>
        <end position="192"/>
    </location>
</feature>
<feature type="compositionally biased region" description="Polar residues" evidence="1">
    <location>
        <begin position="193"/>
        <end position="204"/>
    </location>
</feature>
<proteinExistence type="evidence at transcript level"/>
<organism>
    <name type="scientific">Arabidopsis thaliana</name>
    <name type="common">Mouse-ear cress</name>
    <dbReference type="NCBI Taxonomy" id="3702"/>
    <lineage>
        <taxon>Eukaryota</taxon>
        <taxon>Viridiplantae</taxon>
        <taxon>Streptophyta</taxon>
        <taxon>Embryophyta</taxon>
        <taxon>Tracheophyta</taxon>
        <taxon>Spermatophyta</taxon>
        <taxon>Magnoliopsida</taxon>
        <taxon>eudicotyledons</taxon>
        <taxon>Gunneridae</taxon>
        <taxon>Pentapetalae</taxon>
        <taxon>rosids</taxon>
        <taxon>malvids</taxon>
        <taxon>Brassicales</taxon>
        <taxon>Brassicaceae</taxon>
        <taxon>Camelineae</taxon>
        <taxon>Arabidopsis</taxon>
    </lineage>
</organism>
<protein>
    <recommendedName>
        <fullName evidence="2">Large ribosomal subunit protein eL15y</fullName>
    </recommendedName>
    <alternativeName>
        <fullName>60S ribosomal protein L15-2</fullName>
    </alternativeName>
</protein>
<sequence length="204" mass="24239">MGAYKYVSELWRKKQSDVMRFLQRVRCWEYRQQPSIVRLVRPTRPDKARRLGYKAKQGFVVYRVRVRRGGRKRPVPKGIVYGKPTNQGVTQLKFQRSKRSVAEERAGRKLGGLRVVNSYWLNEDSTYKYYEIILVDPAHNAVRNDPRINWICNPVHKHRELRGLTSEGKKNRGLRGKGHNNHKNRPSRRATWKKNNSISLRRYR</sequence>
<accession>Q8VYF1</accession>
<accession>O23582</accession>
<comment type="similarity">
    <text evidence="3">Belongs to the eukaryotic ribosomal protein eL15 family.</text>
</comment>
<comment type="sequence caution" evidence="3">
    <conflict type="erroneous gene model prediction">
        <sequence resource="EMBL-CDS" id="CAB10520"/>
    </conflict>
</comment>
<comment type="sequence caution" evidence="3">
    <conflict type="erroneous gene model prediction">
        <sequence resource="EMBL-CDS" id="CAB78742"/>
    </conflict>
</comment>
<gene>
    <name type="primary">RPL15B</name>
    <name type="ordered locus">At4g17390</name>
    <name type="ORF">dl4730c</name>
    <name type="ORF">FCAALL.32</name>
</gene>